<name>MAO1_ACIAD</name>
<keyword id="KW-0479">Metal-binding</keyword>
<keyword id="KW-0520">NAD</keyword>
<keyword id="KW-0560">Oxidoreductase</keyword>
<reference key="1">
    <citation type="journal article" date="2004" name="Nucleic Acids Res.">
        <title>Unique features revealed by the genome sequence of Acinetobacter sp. ADP1, a versatile and naturally transformation competent bacterium.</title>
        <authorList>
            <person name="Barbe V."/>
            <person name="Vallenet D."/>
            <person name="Fonknechten N."/>
            <person name="Kreimeyer A."/>
            <person name="Oztas S."/>
            <person name="Labarre L."/>
            <person name="Cruveiller S."/>
            <person name="Robert C."/>
            <person name="Duprat S."/>
            <person name="Wincker P."/>
            <person name="Ornston L.N."/>
            <person name="Weissenbach J."/>
            <person name="Marliere P."/>
            <person name="Cohen G.N."/>
            <person name="Medigue C."/>
        </authorList>
    </citation>
    <scope>NUCLEOTIDE SEQUENCE [LARGE SCALE GENOMIC DNA]</scope>
    <source>
        <strain>ATCC 33305 / BD413 / ADP1</strain>
    </source>
</reference>
<feature type="chain" id="PRO_0000160212" description="NAD-dependent malic enzyme">
    <location>
        <begin position="1"/>
        <end position="566"/>
    </location>
</feature>
<feature type="active site" description="Proton donor" evidence="1">
    <location>
        <position position="105"/>
    </location>
</feature>
<feature type="active site" description="Proton acceptor" evidence="1">
    <location>
        <position position="176"/>
    </location>
</feature>
<feature type="binding site" evidence="1">
    <location>
        <position position="158"/>
    </location>
    <ligand>
        <name>NAD(+)</name>
        <dbReference type="ChEBI" id="CHEBI:57540"/>
    </ligand>
</feature>
<feature type="binding site" evidence="1">
    <location>
        <position position="247"/>
    </location>
    <ligand>
        <name>a divalent metal cation</name>
        <dbReference type="ChEBI" id="CHEBI:60240"/>
    </ligand>
</feature>
<feature type="binding site" evidence="1">
    <location>
        <position position="248"/>
    </location>
    <ligand>
        <name>a divalent metal cation</name>
        <dbReference type="ChEBI" id="CHEBI:60240"/>
    </ligand>
</feature>
<feature type="binding site" evidence="1">
    <location>
        <position position="271"/>
    </location>
    <ligand>
        <name>a divalent metal cation</name>
        <dbReference type="ChEBI" id="CHEBI:60240"/>
    </ligand>
</feature>
<feature type="binding site" evidence="1">
    <location>
        <position position="271"/>
    </location>
    <ligand>
        <name>NAD(+)</name>
        <dbReference type="ChEBI" id="CHEBI:57540"/>
    </ligand>
</feature>
<feature type="binding site" evidence="1">
    <location>
        <position position="419"/>
    </location>
    <ligand>
        <name>NAD(+)</name>
        <dbReference type="ChEBI" id="CHEBI:57540"/>
    </ligand>
</feature>
<feature type="site" description="Important for activity" evidence="1">
    <location>
        <position position="271"/>
    </location>
</feature>
<organism>
    <name type="scientific">Acinetobacter baylyi (strain ATCC 33305 / BD413 / ADP1)</name>
    <dbReference type="NCBI Taxonomy" id="62977"/>
    <lineage>
        <taxon>Bacteria</taxon>
        <taxon>Pseudomonadati</taxon>
        <taxon>Pseudomonadota</taxon>
        <taxon>Gammaproteobacteria</taxon>
        <taxon>Moraxellales</taxon>
        <taxon>Moraxellaceae</taxon>
        <taxon>Acinetobacter</taxon>
    </lineage>
</organism>
<dbReference type="EC" id="1.1.1.38" evidence="1"/>
<dbReference type="EMBL" id="CR543861">
    <property type="protein sequence ID" value="CAG67139.1"/>
    <property type="molecule type" value="Genomic_DNA"/>
</dbReference>
<dbReference type="RefSeq" id="WP_004930582.1">
    <property type="nucleotide sequence ID" value="NC_005966.1"/>
</dbReference>
<dbReference type="SMR" id="Q6FFL8"/>
<dbReference type="STRING" id="202950.GCA_001485005_01900"/>
<dbReference type="GeneID" id="45232685"/>
<dbReference type="KEGG" id="aci:ACIAD0166"/>
<dbReference type="eggNOG" id="COG0281">
    <property type="taxonomic scope" value="Bacteria"/>
</dbReference>
<dbReference type="HOGENOM" id="CLU_011405_5_2_6"/>
<dbReference type="OrthoDB" id="3314528at2"/>
<dbReference type="BioCyc" id="ASP62977:ACIAD_RS00775-MONOMER"/>
<dbReference type="Proteomes" id="UP000000430">
    <property type="component" value="Chromosome"/>
</dbReference>
<dbReference type="GO" id="GO:0005829">
    <property type="term" value="C:cytosol"/>
    <property type="evidence" value="ECO:0007669"/>
    <property type="project" value="TreeGrafter"/>
</dbReference>
<dbReference type="GO" id="GO:0004471">
    <property type="term" value="F:malate dehydrogenase (decarboxylating) (NAD+) activity"/>
    <property type="evidence" value="ECO:0007669"/>
    <property type="project" value="UniProtKB-UniRule"/>
</dbReference>
<dbReference type="GO" id="GO:0046872">
    <property type="term" value="F:metal ion binding"/>
    <property type="evidence" value="ECO:0007669"/>
    <property type="project" value="UniProtKB-KW"/>
</dbReference>
<dbReference type="GO" id="GO:0051287">
    <property type="term" value="F:NAD binding"/>
    <property type="evidence" value="ECO:0007669"/>
    <property type="project" value="InterPro"/>
</dbReference>
<dbReference type="GO" id="GO:0008948">
    <property type="term" value="F:oxaloacetate decarboxylase activity"/>
    <property type="evidence" value="ECO:0007669"/>
    <property type="project" value="UniProtKB-UniRule"/>
</dbReference>
<dbReference type="GO" id="GO:0006108">
    <property type="term" value="P:malate metabolic process"/>
    <property type="evidence" value="ECO:0007669"/>
    <property type="project" value="TreeGrafter"/>
</dbReference>
<dbReference type="CDD" id="cd05312">
    <property type="entry name" value="NAD_bind_1_malic_enz"/>
    <property type="match status" value="1"/>
</dbReference>
<dbReference type="FunFam" id="3.40.50.10380:FF:000001">
    <property type="entry name" value="NAD-dependent malic enzyme"/>
    <property type="match status" value="1"/>
</dbReference>
<dbReference type="FunFam" id="3.40.50.720:FF:000055">
    <property type="entry name" value="NAD-dependent malic enzyme"/>
    <property type="match status" value="1"/>
</dbReference>
<dbReference type="Gene3D" id="3.40.50.10380">
    <property type="entry name" value="Malic enzyme, N-terminal domain"/>
    <property type="match status" value="1"/>
</dbReference>
<dbReference type="Gene3D" id="3.40.50.720">
    <property type="entry name" value="NAD(P)-binding Rossmann-like Domain"/>
    <property type="match status" value="1"/>
</dbReference>
<dbReference type="HAMAP" id="MF_01619">
    <property type="entry name" value="NAD_malic_enz"/>
    <property type="match status" value="1"/>
</dbReference>
<dbReference type="InterPro" id="IPR046346">
    <property type="entry name" value="Aminoacid_DH-like_N_sf"/>
</dbReference>
<dbReference type="InterPro" id="IPR015884">
    <property type="entry name" value="Malic_enzyme_CS"/>
</dbReference>
<dbReference type="InterPro" id="IPR012301">
    <property type="entry name" value="Malic_N_dom"/>
</dbReference>
<dbReference type="InterPro" id="IPR037062">
    <property type="entry name" value="Malic_N_dom_sf"/>
</dbReference>
<dbReference type="InterPro" id="IPR012302">
    <property type="entry name" value="Malic_NAD-bd"/>
</dbReference>
<dbReference type="InterPro" id="IPR001891">
    <property type="entry name" value="Malic_OxRdtase"/>
</dbReference>
<dbReference type="InterPro" id="IPR036291">
    <property type="entry name" value="NAD(P)-bd_dom_sf"/>
</dbReference>
<dbReference type="InterPro" id="IPR023667">
    <property type="entry name" value="NAD_malic_enz_proteobac"/>
</dbReference>
<dbReference type="NCBIfam" id="NF010052">
    <property type="entry name" value="PRK13529.1"/>
    <property type="match status" value="1"/>
</dbReference>
<dbReference type="PANTHER" id="PTHR23406">
    <property type="entry name" value="MALIC ENZYME-RELATED"/>
    <property type="match status" value="1"/>
</dbReference>
<dbReference type="PANTHER" id="PTHR23406:SF34">
    <property type="entry name" value="NAD-DEPENDENT MALIC ENZYME, MITOCHONDRIAL"/>
    <property type="match status" value="1"/>
</dbReference>
<dbReference type="Pfam" id="PF00390">
    <property type="entry name" value="malic"/>
    <property type="match status" value="1"/>
</dbReference>
<dbReference type="Pfam" id="PF03949">
    <property type="entry name" value="Malic_M"/>
    <property type="match status" value="1"/>
</dbReference>
<dbReference type="PIRSF" id="PIRSF000106">
    <property type="entry name" value="ME"/>
    <property type="match status" value="1"/>
</dbReference>
<dbReference type="PRINTS" id="PR00072">
    <property type="entry name" value="MALOXRDTASE"/>
</dbReference>
<dbReference type="SMART" id="SM01274">
    <property type="entry name" value="malic"/>
    <property type="match status" value="1"/>
</dbReference>
<dbReference type="SMART" id="SM00919">
    <property type="entry name" value="Malic_M"/>
    <property type="match status" value="1"/>
</dbReference>
<dbReference type="SUPFAM" id="SSF53223">
    <property type="entry name" value="Aminoacid dehydrogenase-like, N-terminal domain"/>
    <property type="match status" value="1"/>
</dbReference>
<dbReference type="SUPFAM" id="SSF51735">
    <property type="entry name" value="NAD(P)-binding Rossmann-fold domains"/>
    <property type="match status" value="1"/>
</dbReference>
<dbReference type="PROSITE" id="PS00331">
    <property type="entry name" value="MALIC_ENZYMES"/>
    <property type="match status" value="1"/>
</dbReference>
<protein>
    <recommendedName>
        <fullName evidence="1">NAD-dependent malic enzyme</fullName>
        <shortName evidence="1">NAD-ME</shortName>
        <ecNumber evidence="1">1.1.1.38</ecNumber>
    </recommendedName>
</protein>
<comment type="catalytic activity">
    <reaction evidence="1">
        <text>(S)-malate + NAD(+) = pyruvate + CO2 + NADH</text>
        <dbReference type="Rhea" id="RHEA:12653"/>
        <dbReference type="ChEBI" id="CHEBI:15361"/>
        <dbReference type="ChEBI" id="CHEBI:15589"/>
        <dbReference type="ChEBI" id="CHEBI:16526"/>
        <dbReference type="ChEBI" id="CHEBI:57540"/>
        <dbReference type="ChEBI" id="CHEBI:57945"/>
        <dbReference type="EC" id="1.1.1.38"/>
    </reaction>
</comment>
<comment type="catalytic activity">
    <reaction evidence="1">
        <text>oxaloacetate + H(+) = pyruvate + CO2</text>
        <dbReference type="Rhea" id="RHEA:15641"/>
        <dbReference type="ChEBI" id="CHEBI:15361"/>
        <dbReference type="ChEBI" id="CHEBI:15378"/>
        <dbReference type="ChEBI" id="CHEBI:16452"/>
        <dbReference type="ChEBI" id="CHEBI:16526"/>
        <dbReference type="EC" id="1.1.1.38"/>
    </reaction>
</comment>
<comment type="cofactor">
    <cofactor evidence="1">
        <name>Mg(2+)</name>
        <dbReference type="ChEBI" id="CHEBI:18420"/>
    </cofactor>
    <cofactor evidence="1">
        <name>Mn(2+)</name>
        <dbReference type="ChEBI" id="CHEBI:29035"/>
    </cofactor>
    <text evidence="1">Divalent metal cations. Prefers magnesium or manganese.</text>
</comment>
<comment type="subunit">
    <text evidence="1">Homotetramer.</text>
</comment>
<comment type="similarity">
    <text evidence="1">Belongs to the malic enzymes family.</text>
</comment>
<sequence length="566" mass="62969">MTAETNTNKHPLYIPYAGYTLLELPLLNKGSAFTQEERSHFNLHGLIPHVIETIEEQSQRSYQQYGAFNDDINKHIYLRNIQDTNETLFYRLINDHLEEMMPIIYTPTVGEACQRFSDIYRRHRGIFISYPDREHIDDILQNVSKRNVKVIVITDGERILGLGDQGIGGMGIPIGKLSLYTACGGISPAYTLPITIDVGTNNQQLLNDPIYMGWRQPRISGDEYYEFIDQVLTGIRRRWPHALIQFEDFAQKNAMPLLTKYRDKFCCFNDDIQGTAAVSVGSLIAASRAAGKQLKDQTITFLGAGSAGCGIAEQIVAQMVAEGLTDAQARARVYMVDRFGLITENQPNLLDFQRKLAQKAEVVSDWGNVEEVISLLDVVKNAKPTVLIGVSGQPGLFTEEVIRTLAENCERPIVMPLSNPTSRVEALPSDVIQWTNGRALIATGSPFAPVNYQGKLYNISQCNNSYIFPGIGLGVIASGAKRVTDNMLMASSNALADCSPLLQNPNADLLPAIADIQDVSKRIAFKVAKAAIEDGVALNMSDEVLLQNIEKEFWKPKYRGYKRVPF</sequence>
<evidence type="ECO:0000255" key="1">
    <source>
        <dbReference type="HAMAP-Rule" id="MF_01619"/>
    </source>
</evidence>
<proteinExistence type="inferred from homology"/>
<gene>
    <name evidence="1" type="primary">maeA</name>
    <name type="ordered locus">ACIAD0166</name>
</gene>
<accession>Q6FFL8</accession>